<proteinExistence type="evidence at protein level"/>
<organism>
    <name type="scientific">Galanthus nivalis</name>
    <name type="common">Common snowdrop</name>
    <dbReference type="NCBI Taxonomy" id="4670"/>
    <lineage>
        <taxon>Eukaryota</taxon>
        <taxon>Viridiplantae</taxon>
        <taxon>Streptophyta</taxon>
        <taxon>Embryophyta</taxon>
        <taxon>Tracheophyta</taxon>
        <taxon>Spermatophyta</taxon>
        <taxon>Magnoliopsida</taxon>
        <taxon>Liliopsida</taxon>
        <taxon>Asparagales</taxon>
        <taxon>Amaryllidaceae</taxon>
        <taxon>Amaryllidoideae</taxon>
        <taxon>Galanthus</taxon>
    </lineage>
</organism>
<reference key="1">
    <citation type="journal article" date="1991" name="Eur. J. Biochem.">
        <title>Biosynthesis, primary structure and molecular cloning of snowdrop (Galanthus nivalis L.) lectin.</title>
        <authorList>
            <person name="van Damme E.J.M."/>
            <person name="Kaku H."/>
            <person name="Perini F."/>
            <person name="Goldstein I.J."/>
            <person name="Peeters B."/>
            <person name="Yagi F."/>
            <person name="Decock B."/>
            <person name="Peumans W.J."/>
        </authorList>
    </citation>
    <scope>NUCLEOTIDE SEQUENCE [MRNA]</scope>
    <scope>PARTIAL PROTEIN SEQUENCE</scope>
</reference>
<reference key="2">
    <citation type="journal article" date="1991" name="Antimicrob. Agents Chemother.">
        <title>Alpha-(1-3)- and alpha-(1-6)-D-mannose-specific plant lectins are markedly inhibitory to human immunodeficiency virus and cytomegalovirus infections in vitro.</title>
        <authorList>
            <person name="Balzarini J."/>
            <person name="Schols D."/>
            <person name="Neyts J."/>
            <person name="Van Damme E."/>
            <person name="Peumans W."/>
            <person name="De Clercq E."/>
        </authorList>
    </citation>
    <scope>FUNCTION</scope>
</reference>
<reference key="3">
    <citation type="journal article" date="1996" name="Structure">
        <title>The 2.0 A structure of a cross-linked complex between snowdrop lectin and a branched mannopentaose: evidence for two unique binding modes.</title>
        <authorList>
            <person name="Wright C.S."/>
            <person name="Hester G."/>
        </authorList>
    </citation>
    <scope>X-RAY CRYSTALLOGRAPHY (2.0 ANGSTROMS)</scope>
    <scope>DISULFIDE BOND</scope>
</reference>
<reference key="4">
    <citation type="journal article" date="2021" name="Toxicon">
        <title>OdTx12/GNA, a chimeric variant of a beta excitatory toxin from Odontobuthus doriae, reveals oral toxicity towards Locusta migratoria and Tenebrio molitor.</title>
        <authorList>
            <person name="Khoshdel Nezamiha F."/>
            <person name="Imani S."/>
            <person name="Arabi Mianroodi R."/>
            <person name="Tirgari S."/>
            <person name="Shahbazzadeh D."/>
        </authorList>
    </citation>
    <scope>BIOTECHNOLOGY</scope>
    <scope>RECOMBINANT EXPRESSION AS A CHIMERIC VARIANT</scope>
</reference>
<name>LEC_GALNI</name>
<sequence length="157" mass="16917">MAKASLLILAAIFLGVITPSCLSDNILYSGETLSTGEFLNYGSFVFIMQEDCNLVLYDVDKPIWATNTGGLSRSCFLSMQTDGNLVVYNPSNKPIWASNTGGQNGNYVCILQKDRNVVIYGTDRWATGTHTGLVGIPASPPSEKYPTAGKIKLVTAK</sequence>
<feature type="signal peptide" description="Or 23; in 70% of the molecules">
    <location>
        <begin position="1"/>
        <end position="19"/>
    </location>
</feature>
<feature type="chain" id="PRO_0000021586" description="Mannose-specific lectin">
    <location>
        <begin position="20"/>
        <end position="128"/>
    </location>
</feature>
<feature type="propeptide" id="PRO_0000021587" description="Removed in mature form">
    <location>
        <begin position="129"/>
        <end position="157"/>
    </location>
</feature>
<feature type="domain" description="Bulb-type lectin" evidence="3">
    <location>
        <begin position="24"/>
        <end position="132"/>
    </location>
</feature>
<feature type="binding site" evidence="2">
    <location>
        <position position="49"/>
    </location>
    <ligand>
        <name>alpha-D-mannopyranose</name>
        <dbReference type="ChEBI" id="CHEBI:28729"/>
    </ligand>
</feature>
<feature type="binding site" evidence="2">
    <location>
        <position position="51"/>
    </location>
    <ligand>
        <name>alpha-D-mannopyranose</name>
        <dbReference type="ChEBI" id="CHEBI:28729"/>
    </ligand>
</feature>
<feature type="binding site" evidence="2">
    <location>
        <position position="53"/>
    </location>
    <ligand>
        <name>alpha-D-mannopyranose</name>
        <dbReference type="ChEBI" id="CHEBI:28729"/>
    </ligand>
</feature>
<feature type="binding site" evidence="2">
    <location>
        <position position="57"/>
    </location>
    <ligand>
        <name>alpha-D-mannopyranose</name>
        <dbReference type="ChEBI" id="CHEBI:28729"/>
    </ligand>
</feature>
<feature type="binding site" evidence="2">
    <location>
        <position position="60"/>
    </location>
    <ligand>
        <name>alpha-D-mannopyranose</name>
        <dbReference type="ChEBI" id="CHEBI:28729"/>
    </ligand>
</feature>
<feature type="binding site" evidence="2">
    <location>
        <position position="61"/>
    </location>
    <ligand>
        <name>alpha-D-mannopyranose</name>
        <dbReference type="ChEBI" id="CHEBI:28729"/>
    </ligand>
</feature>
<feature type="binding site" evidence="2">
    <location>
        <position position="64"/>
    </location>
    <ligand>
        <name>alpha-D-mannopyranose</name>
        <dbReference type="ChEBI" id="CHEBI:28729"/>
    </ligand>
</feature>
<feature type="binding site" evidence="2">
    <location>
        <position position="65"/>
    </location>
    <ligand>
        <name>alpha-D-mannopyranose</name>
        <dbReference type="ChEBI" id="CHEBI:28729"/>
    </ligand>
</feature>
<feature type="binding site" evidence="2">
    <location>
        <position position="67"/>
    </location>
    <ligand>
        <name>alpha-D-mannopyranose</name>
        <dbReference type="ChEBI" id="CHEBI:28729"/>
    </ligand>
</feature>
<feature type="binding site" evidence="2">
    <location>
        <position position="80"/>
    </location>
    <ligand>
        <name>alpha-D-mannopyranose</name>
        <dbReference type="ChEBI" id="CHEBI:28729"/>
    </ligand>
</feature>
<feature type="binding site" evidence="2">
    <location>
        <position position="82"/>
    </location>
    <ligand>
        <name>alpha-D-mannopyranose</name>
        <dbReference type="ChEBI" id="CHEBI:28729"/>
    </ligand>
</feature>
<feature type="binding site" evidence="2">
    <location>
        <position position="84"/>
    </location>
    <ligand>
        <name>alpha-D-mannopyranose</name>
        <dbReference type="ChEBI" id="CHEBI:28729"/>
    </ligand>
</feature>
<feature type="binding site" evidence="2">
    <location>
        <position position="88"/>
    </location>
    <ligand>
        <name>alpha-D-mannopyranose</name>
        <dbReference type="ChEBI" id="CHEBI:28729"/>
    </ligand>
</feature>
<feature type="binding site" evidence="2">
    <location>
        <position position="95"/>
    </location>
    <ligand>
        <name>alpha-D-mannopyranose</name>
        <dbReference type="ChEBI" id="CHEBI:28729"/>
    </ligand>
</feature>
<feature type="binding site" evidence="2">
    <location>
        <position position="96"/>
    </location>
    <ligand>
        <name>alpha-D-mannopyranose</name>
        <dbReference type="ChEBI" id="CHEBI:28729"/>
    </ligand>
</feature>
<feature type="binding site" evidence="2">
    <location>
        <position position="99"/>
    </location>
    <ligand>
        <name>alpha-D-mannopyranose</name>
        <dbReference type="ChEBI" id="CHEBI:28729"/>
    </ligand>
</feature>
<feature type="binding site" evidence="2">
    <location>
        <position position="106"/>
    </location>
    <ligand>
        <name>alpha-D-mannopyranose</name>
        <dbReference type="ChEBI" id="CHEBI:28729"/>
    </ligand>
</feature>
<feature type="binding site" evidence="2">
    <location>
        <position position="112"/>
    </location>
    <ligand>
        <name>alpha-D-mannopyranose</name>
        <dbReference type="ChEBI" id="CHEBI:28729"/>
    </ligand>
</feature>
<feature type="binding site" evidence="2">
    <location>
        <position position="114"/>
    </location>
    <ligand>
        <name>alpha-D-mannopyranose</name>
        <dbReference type="ChEBI" id="CHEBI:28729"/>
    </ligand>
</feature>
<feature type="binding site" evidence="2">
    <location>
        <position position="116"/>
    </location>
    <ligand>
        <name>alpha-D-mannopyranose</name>
        <dbReference type="ChEBI" id="CHEBI:28729"/>
    </ligand>
</feature>
<feature type="binding site" evidence="2">
    <location>
        <position position="120"/>
    </location>
    <ligand>
        <name>alpha-D-mannopyranose</name>
        <dbReference type="ChEBI" id="CHEBI:28729"/>
    </ligand>
</feature>
<feature type="binding site" evidence="2">
    <location>
        <position position="125"/>
    </location>
    <ligand>
        <name>alpha-D-mannopyranose</name>
        <dbReference type="ChEBI" id="CHEBI:28729"/>
    </ligand>
</feature>
<feature type="disulfide bond" evidence="5 10 11 12">
    <location>
        <begin position="52"/>
        <end position="75"/>
    </location>
</feature>
<feature type="sequence variant">
    <original>C</original>
    <variation>Y</variation>
    <location>
        <position position="21"/>
    </location>
</feature>
<feature type="sequence variant">
    <original>S</original>
    <variation>H</variation>
    <location>
        <position position="74"/>
    </location>
</feature>
<feature type="sequence variant">
    <original>F</original>
    <variation>Y</variation>
    <location>
        <position position="76"/>
    </location>
</feature>
<feature type="sequence variant">
    <original>C</original>
    <variation>S</variation>
    <location>
        <position position="109"/>
    </location>
</feature>
<feature type="strand" evidence="13">
    <location>
        <begin position="26"/>
        <end position="28"/>
    </location>
</feature>
<feature type="strand" evidence="13">
    <location>
        <begin position="31"/>
        <end position="33"/>
    </location>
</feature>
<feature type="strand" evidence="13">
    <location>
        <begin position="38"/>
        <end position="41"/>
    </location>
</feature>
<feature type="strand" evidence="13">
    <location>
        <begin position="44"/>
        <end position="48"/>
    </location>
</feature>
<feature type="strand" evidence="13">
    <location>
        <begin position="54"/>
        <end position="58"/>
    </location>
</feature>
<feature type="strand" evidence="13">
    <location>
        <begin position="61"/>
        <end position="65"/>
    </location>
</feature>
<feature type="strand" evidence="13">
    <location>
        <begin position="76"/>
        <end position="79"/>
    </location>
</feature>
<feature type="strand" evidence="13">
    <location>
        <begin position="85"/>
        <end position="88"/>
    </location>
</feature>
<feature type="strand" evidence="13">
    <location>
        <begin position="94"/>
        <end position="97"/>
    </location>
</feature>
<feature type="strand" evidence="13">
    <location>
        <begin position="107"/>
        <end position="111"/>
    </location>
</feature>
<feature type="strand" evidence="13">
    <location>
        <begin position="117"/>
        <end position="121"/>
    </location>
</feature>
<accession>P30617</accession>
<evidence type="ECO:0000250" key="1"/>
<evidence type="ECO:0000250" key="2">
    <source>
        <dbReference type="UniProtKB" id="C0HM45"/>
    </source>
</evidence>
<evidence type="ECO:0000255" key="3">
    <source>
        <dbReference type="PROSITE-ProRule" id="PRU00038"/>
    </source>
</evidence>
<evidence type="ECO:0000269" key="4">
    <source>
    </source>
</evidence>
<evidence type="ECO:0000269" key="5">
    <source>
    </source>
</evidence>
<evidence type="ECO:0000303" key="6">
    <source>
    </source>
</evidence>
<evidence type="ECO:0000303" key="7">
    <source>
    </source>
</evidence>
<evidence type="ECO:0000303" key="8">
    <source>
    </source>
</evidence>
<evidence type="ECO:0000305" key="9">
    <source>
    </source>
</evidence>
<evidence type="ECO:0007744" key="10">
    <source>
        <dbReference type="PDB" id="1JPC"/>
    </source>
</evidence>
<evidence type="ECO:0007744" key="11">
    <source>
        <dbReference type="PDB" id="1MSA"/>
    </source>
</evidence>
<evidence type="ECO:0007744" key="12">
    <source>
        <dbReference type="PDB" id="1NIV"/>
    </source>
</evidence>
<evidence type="ECO:0007829" key="13">
    <source>
        <dbReference type="PDB" id="1JPC"/>
    </source>
</evidence>
<comment type="function">
    <text evidence="4">Mannose-specific lectin which binds alpha-D-linked mannose (PubMed:1645507). Displays a high affinity for alpha-(1-3)-mannose oligomers (PubMed:1645507). Displays antiviral activity and therefore may contribute to defense against infections (PubMed:1645507).</text>
</comment>
<comment type="subunit">
    <text>Homotetramer.</text>
</comment>
<comment type="subcellular location">
    <subcellularLocation>
        <location evidence="1">Secreted</location>
    </subcellularLocation>
</comment>
<comment type="biotechnology">
    <text evidence="9">Can be used as a chimeric variant with insecticidal venom toxins to obtain biological insecticide candidates. This lectin has receptors on insect midgut and this allows its internalization into insects hemolymph. In an other hand, scorpion and spiders toxins are naturally not toxic when administered orally to insect larvae, but a fusion with this lectin makes them toxic for the larvae that would eat them.</text>
</comment>
<comment type="miscellaneous">
    <text evidence="4">Inhibits the attachment of HIV viruses to susceptible cells (PubMed:1645507). Has a significant inhibitory effect against various viruses including HIV-1 (IC(50)=0.4 ug/ml), HIV-2 (IC(50)=0.3 ug/ml), and SIV (IC(50)=0.8 ug/ml) in MT-4 cells (PubMed:1645507). Also inhibits human CMV replication in HEL cells (IC(50)=0.9 to 1.6 ug/ml) and inhibits syncytium formation between HUT-78/HIV-1 and MOLT-4 cells (IC(50)=2.7 ug/ml), and HUT-78/HIV-2 and MOLT-4 cells (IC(50)=3 ug/ml) (PubMed:1645507).</text>
</comment>
<protein>
    <recommendedName>
        <fullName evidence="6">Mannose-specific lectin</fullName>
    </recommendedName>
    <alternativeName>
        <fullName evidence="6">Agglutinin</fullName>
    </alternativeName>
    <alternativeName>
        <fullName evidence="6">LecGNA 2</fullName>
    </alternativeName>
    <alternativeName>
        <fullName evidence="6 7 8">Snowdrop lectin</fullName>
    </alternativeName>
</protein>
<keyword id="KW-0002">3D-structure</keyword>
<keyword id="KW-0930">Antiviral protein</keyword>
<keyword id="KW-0903">Direct protein sequencing</keyword>
<keyword id="KW-1015">Disulfide bond</keyword>
<keyword id="KW-0430">Lectin</keyword>
<keyword id="KW-0465">Mannose-binding</keyword>
<keyword id="KW-0611">Plant defense</keyword>
<keyword id="KW-0964">Secreted</keyword>
<keyword id="KW-0732">Signal</keyword>
<dbReference type="EMBL" id="M55556">
    <property type="protein sequence ID" value="AAA33346.1"/>
    <property type="molecule type" value="mRNA"/>
</dbReference>
<dbReference type="PIR" id="S19735">
    <property type="entry name" value="S19735"/>
</dbReference>
<dbReference type="PDB" id="1JPC">
    <property type="method" value="X-ray"/>
    <property type="resolution" value="2.00 A"/>
    <property type="chains" value="A=24-132"/>
</dbReference>
<dbReference type="PDB" id="1MSA">
    <property type="method" value="X-ray"/>
    <property type="resolution" value="2.29 A"/>
    <property type="chains" value="A/B/C/D=24-132"/>
</dbReference>
<dbReference type="PDB" id="1NIV">
    <property type="method" value="X-ray"/>
    <property type="resolution" value="3.00 A"/>
    <property type="chains" value="A/C=24-132"/>
</dbReference>
<dbReference type="PDBsum" id="1JPC"/>
<dbReference type="PDBsum" id="1MSA"/>
<dbReference type="PDBsum" id="1NIV"/>
<dbReference type="SMR" id="P30617"/>
<dbReference type="UniLectin" id="P30617"/>
<dbReference type="EvolutionaryTrace" id="P30617"/>
<dbReference type="GO" id="GO:0005576">
    <property type="term" value="C:extracellular region"/>
    <property type="evidence" value="ECO:0007669"/>
    <property type="project" value="UniProtKB-SubCell"/>
</dbReference>
<dbReference type="GO" id="GO:0005537">
    <property type="term" value="F:D-mannose binding"/>
    <property type="evidence" value="ECO:0000314"/>
    <property type="project" value="UniProtKB"/>
</dbReference>
<dbReference type="GO" id="GO:0006952">
    <property type="term" value="P:defense response"/>
    <property type="evidence" value="ECO:0007669"/>
    <property type="project" value="UniProtKB-KW"/>
</dbReference>
<dbReference type="GO" id="GO:0050688">
    <property type="term" value="P:regulation of defense response to virus"/>
    <property type="evidence" value="ECO:0007669"/>
    <property type="project" value="UniProtKB-KW"/>
</dbReference>
<dbReference type="GO" id="GO:0009615">
    <property type="term" value="P:response to virus"/>
    <property type="evidence" value="ECO:0000314"/>
    <property type="project" value="UniProtKB"/>
</dbReference>
<dbReference type="CDD" id="cd00028">
    <property type="entry name" value="B_lectin"/>
    <property type="match status" value="1"/>
</dbReference>
<dbReference type="Gene3D" id="2.90.10.10">
    <property type="entry name" value="Bulb-type lectin domain"/>
    <property type="match status" value="1"/>
</dbReference>
<dbReference type="InterPro" id="IPR001480">
    <property type="entry name" value="Bulb-type_lectin_dom"/>
</dbReference>
<dbReference type="InterPro" id="IPR036426">
    <property type="entry name" value="Bulb-type_lectin_dom_sf"/>
</dbReference>
<dbReference type="SMART" id="SM00108">
    <property type="entry name" value="B_lectin"/>
    <property type="match status" value="1"/>
</dbReference>
<dbReference type="SUPFAM" id="SSF51110">
    <property type="entry name" value="alpha-D-mannose-specific plant lectins"/>
    <property type="match status" value="1"/>
</dbReference>
<dbReference type="PROSITE" id="PS50927">
    <property type="entry name" value="BULB_LECTIN"/>
    <property type="match status" value="1"/>
</dbReference>